<proteinExistence type="inferred from homology"/>
<gene>
    <name evidence="5" type="primary">chs1</name>
    <name type="ORF">FOXG_05078</name>
</gene>
<feature type="chain" id="PRO_0000460828" description="Chitin synthase 1">
    <location>
        <begin position="1"/>
        <end position="903"/>
    </location>
</feature>
<feature type="transmembrane region" description="Helical" evidence="1">
    <location>
        <begin position="444"/>
        <end position="464"/>
    </location>
</feature>
<feature type="transmembrane region" description="Helical" evidence="1">
    <location>
        <begin position="543"/>
        <end position="563"/>
    </location>
</feature>
<feature type="transmembrane region" description="Helical" evidence="1">
    <location>
        <begin position="573"/>
        <end position="593"/>
    </location>
</feature>
<feature type="transmembrane region" description="Helical" evidence="1">
    <location>
        <begin position="619"/>
        <end position="639"/>
    </location>
</feature>
<feature type="transmembrane region" description="Helical" evidence="1">
    <location>
        <begin position="654"/>
        <end position="674"/>
    </location>
</feature>
<feature type="transmembrane region" description="Helical" evidence="1">
    <location>
        <begin position="700"/>
        <end position="720"/>
    </location>
</feature>
<feature type="transmembrane region" description="Helical" evidence="1">
    <location>
        <begin position="729"/>
        <end position="749"/>
    </location>
</feature>
<feature type="transmembrane region" description="Helical" evidence="1">
    <location>
        <begin position="828"/>
        <end position="848"/>
    </location>
</feature>
<feature type="transmembrane region" description="Helical" evidence="1">
    <location>
        <begin position="875"/>
        <end position="895"/>
    </location>
</feature>
<feature type="region of interest" description="Disordered" evidence="3">
    <location>
        <begin position="1"/>
        <end position="154"/>
    </location>
</feature>
<feature type="compositionally biased region" description="Polar residues" evidence="3">
    <location>
        <begin position="67"/>
        <end position="79"/>
    </location>
</feature>
<feature type="compositionally biased region" description="Low complexity" evidence="3">
    <location>
        <begin position="100"/>
        <end position="117"/>
    </location>
</feature>
<feature type="compositionally biased region" description="Polar residues" evidence="3">
    <location>
        <begin position="135"/>
        <end position="150"/>
    </location>
</feature>
<feature type="glycosylation site" description="N-linked (GlcNAc...) asparagine" evidence="2">
    <location>
        <position position="79"/>
    </location>
</feature>
<feature type="sequence conflict" description="In Ref. 1; AAT77181." evidence="6" ref="1">
    <original>G</original>
    <variation>S</variation>
    <location>
        <position position="403"/>
    </location>
</feature>
<feature type="sequence conflict" description="In Ref. 1; AAT77181." evidence="6" ref="1">
    <location>
        <begin position="860"/>
        <end position="861"/>
    </location>
</feature>
<evidence type="ECO:0000255" key="1"/>
<evidence type="ECO:0000255" key="2">
    <source>
        <dbReference type="PROSITE-ProRule" id="PRU00498"/>
    </source>
</evidence>
<evidence type="ECO:0000256" key="3">
    <source>
        <dbReference type="SAM" id="MobiDB-lite"/>
    </source>
</evidence>
<evidence type="ECO:0000269" key="4">
    <source>
    </source>
</evidence>
<evidence type="ECO:0000303" key="5">
    <source>
    </source>
</evidence>
<evidence type="ECO:0000305" key="6"/>
<evidence type="ECO:0000305" key="7">
    <source>
    </source>
</evidence>
<sequence length="903" mass="102493">MDPRYGAQPQQHPHPHRTPSPGQPLQQGYQLDDNPFDDGRYGQYGPSQQHLAMPSGPDQHRLPTPSDHLNLNAAQSVDNLSGYGPPGDYAVNPEAHHDAYYNQPYEPRPQQQPYDQGYDQEYDQPYDDHRPMLQHQPSDAPSEPYQDQPQQGGGIKRWKTVKQVLLYRGNLVLDCPVPPVLLQQNPHGERDEFTHMRYSAATCDPNDFYDHDFTLRQRLFTKPRHTELFIVVTMYNEDDILFARTMTGVFKNIEYMCNRPNSKTWGKDAWKKIVVCVVSDGRSKINPRTKALLAGMGVYQEGIAKQQVNGKDVTAHIYEYTTQTHLQIKNDVVQLVHRRQPVQMLFCLKEKNAKKINSHRWFFTAFGRVLDPNICVLLDAGTRPGGSSIYHLWKAFDLEPMCGGACGEIKAMLGTGGKYLLNPLVAAQNFEYKMSNILDKPLESAFGFISVLPGAFSAYRYVALQNDKNGKGPLEKYFLGETLHGGSDAGLFESNMYLAEDRILCFELVTKRNCHWILQYVKSATGETDVPDTVTELVLQRRRWLNGSFFAAIYAIVHFLDFLRSDHTFLRKFAFFIEFIFNTINMIFAWFAIGNFFLVFKILTTSLGDDTLLGRTGEILGVVFTWLYGVFLITCFVLSLGNRPAGSGRLYTAMCWFWAIIMIYLLFAAIFIAVKAIIADVNDANGFNFADIFKNKVFYMLIISVMSTFGIWLIASLIMLDPWHMATSLVQYMLLTPTFTNVLNVYAFCNTHDVSWGTKGDDKVEKLPSVNTKDGTGKTDLPDEGDLNAQYQRELAVFAQKHVEVKTTPTPSQLQEKQMDYYRGVRTGVVLIWMVSNFGLAALVLSSAGLDRISPNKDKDHEAEQLSRSNIYMSIVLWSVAGLSAFKFIGAMWFLVVRMFRGV</sequence>
<organism>
    <name type="scientific">Fusarium oxysporum f. sp. lycopersici (strain 4287 / CBS 123668 / FGSC 9935 / NRRL 34936)</name>
    <name type="common">Fusarium vascular wilt of tomato</name>
    <dbReference type="NCBI Taxonomy" id="426428"/>
    <lineage>
        <taxon>Eukaryota</taxon>
        <taxon>Fungi</taxon>
        <taxon>Dikarya</taxon>
        <taxon>Ascomycota</taxon>
        <taxon>Pezizomycotina</taxon>
        <taxon>Sordariomycetes</taxon>
        <taxon>Hypocreomycetidae</taxon>
        <taxon>Hypocreales</taxon>
        <taxon>Nectriaceae</taxon>
        <taxon>Fusarium</taxon>
        <taxon>Fusarium oxysporum species complex</taxon>
    </lineage>
</organism>
<protein>
    <recommendedName>
        <fullName evidence="5">Chitin synthase 1</fullName>
        <ecNumber evidence="7">2.4.1.16</ecNumber>
    </recommendedName>
    <alternativeName>
        <fullName evidence="6">Chitin-UDP acetyl-glucosaminyl transferase 1</fullName>
    </alternativeName>
    <alternativeName>
        <fullName evidence="5">Class-I chitin synthase 1</fullName>
    </alternativeName>
</protein>
<dbReference type="EC" id="2.4.1.16" evidence="7"/>
<dbReference type="EMBL" id="AY572421">
    <property type="protein sequence ID" value="AAT77181.1"/>
    <property type="molecule type" value="Genomic_DNA"/>
</dbReference>
<dbReference type="EMBL" id="DS231700">
    <property type="protein sequence ID" value="KNB02019.1"/>
    <property type="molecule type" value="Genomic_DNA"/>
</dbReference>
<dbReference type="EMBL" id="DS231700">
    <property type="protein sequence ID" value="KNB02018.1"/>
    <property type="status" value="ALT_INIT"/>
    <property type="molecule type" value="Genomic_DNA"/>
</dbReference>
<dbReference type="RefSeq" id="XP_018240063.1">
    <property type="nucleotide sequence ID" value="XM_018383181.1"/>
</dbReference>
<dbReference type="RefSeq" id="XP_018240064.1">
    <property type="nucleotide sequence ID" value="XM_018383182.1"/>
</dbReference>
<dbReference type="SMR" id="A0A0J9UR41"/>
<dbReference type="CAZy" id="GT2">
    <property type="family name" value="Glycosyltransferase Family 2"/>
</dbReference>
<dbReference type="EnsemblFungi" id="FOXG_05078T0">
    <property type="protein sequence ID" value="FOXG_05078P0"/>
    <property type="gene ID" value="FOXG_05078"/>
</dbReference>
<dbReference type="GeneID" id="28947079"/>
<dbReference type="KEGG" id="fox:FOXG_05078"/>
<dbReference type="VEuPathDB" id="FungiDB:FOXG_05078"/>
<dbReference type="OMA" id="AWILHYV"/>
<dbReference type="OrthoDB" id="40446at110618"/>
<dbReference type="Proteomes" id="UP000009097">
    <property type="component" value="Unassembled WGS sequence"/>
</dbReference>
<dbReference type="GO" id="GO:0030428">
    <property type="term" value="C:cell septum"/>
    <property type="evidence" value="ECO:0007669"/>
    <property type="project" value="TreeGrafter"/>
</dbReference>
<dbReference type="GO" id="GO:0045009">
    <property type="term" value="C:chitosome"/>
    <property type="evidence" value="ECO:0007669"/>
    <property type="project" value="EnsemblFungi"/>
</dbReference>
<dbReference type="GO" id="GO:0005886">
    <property type="term" value="C:plasma membrane"/>
    <property type="evidence" value="ECO:0007669"/>
    <property type="project" value="UniProtKB-SubCell"/>
</dbReference>
<dbReference type="GO" id="GO:0004100">
    <property type="term" value="F:chitin synthase activity"/>
    <property type="evidence" value="ECO:0007669"/>
    <property type="project" value="EnsemblFungi"/>
</dbReference>
<dbReference type="GO" id="GO:0030476">
    <property type="term" value="P:ascospore wall assembly"/>
    <property type="evidence" value="ECO:0007669"/>
    <property type="project" value="EnsemblFungi"/>
</dbReference>
<dbReference type="GO" id="GO:0006031">
    <property type="term" value="P:chitin biosynthetic process"/>
    <property type="evidence" value="ECO:0007669"/>
    <property type="project" value="EnsemblFungi"/>
</dbReference>
<dbReference type="GO" id="GO:0000920">
    <property type="term" value="P:septum digestion after cytokinesis"/>
    <property type="evidence" value="ECO:0007669"/>
    <property type="project" value="EnsemblFungi"/>
</dbReference>
<dbReference type="CDD" id="cd04190">
    <property type="entry name" value="Chitin_synth_C"/>
    <property type="match status" value="1"/>
</dbReference>
<dbReference type="InterPro" id="IPR004835">
    <property type="entry name" value="Chitin_synth"/>
</dbReference>
<dbReference type="InterPro" id="IPR004834">
    <property type="entry name" value="Chitin_synth_fun"/>
</dbReference>
<dbReference type="InterPro" id="IPR013616">
    <property type="entry name" value="Chitin_synth_N"/>
</dbReference>
<dbReference type="PANTHER" id="PTHR22914">
    <property type="entry name" value="CHITIN SYNTHASE"/>
    <property type="match status" value="1"/>
</dbReference>
<dbReference type="PANTHER" id="PTHR22914:SF9">
    <property type="entry name" value="CHITIN SYNTHASE 1"/>
    <property type="match status" value="1"/>
</dbReference>
<dbReference type="Pfam" id="PF01644">
    <property type="entry name" value="Chitin_synth_1"/>
    <property type="match status" value="1"/>
</dbReference>
<dbReference type="Pfam" id="PF08407">
    <property type="entry name" value="Chitin_synth_1N"/>
    <property type="match status" value="1"/>
</dbReference>
<reference key="1">
    <citation type="journal article" date="2004" name="Microbiology">
        <title>Role of chitin synthase genes in Fusarium oxysporum.</title>
        <authorList>
            <person name="Martin-Udiroz M."/>
            <person name="Madrid M.P."/>
            <person name="Roncero M.I.G."/>
        </authorList>
    </citation>
    <scope>NUCLEOTIDE SEQUENCE [GENOMIC DNA]</scope>
    <scope>FUNCTION</scope>
    <scope>DISRUPTION PHENOTYPE</scope>
    <source>
        <strain>4287 / CBS 123668 / FGSC 9935 / NRRL 34936</strain>
    </source>
</reference>
<reference key="2">
    <citation type="journal article" date="2010" name="Nature">
        <title>Comparative genomics reveals mobile pathogenicity chromosomes in Fusarium.</title>
        <authorList>
            <person name="Ma L.-J."/>
            <person name="van der Does H.C."/>
            <person name="Borkovich K.A."/>
            <person name="Coleman J.J."/>
            <person name="Daboussi M.-J."/>
            <person name="Di Pietro A."/>
            <person name="Dufresne M."/>
            <person name="Freitag M."/>
            <person name="Grabherr M."/>
            <person name="Henrissat B."/>
            <person name="Houterman P.M."/>
            <person name="Kang S."/>
            <person name="Shim W.-B."/>
            <person name="Woloshuk C."/>
            <person name="Xie X."/>
            <person name="Xu J.-R."/>
            <person name="Antoniw J."/>
            <person name="Baker S.E."/>
            <person name="Bluhm B.H."/>
            <person name="Breakspear A."/>
            <person name="Brown D.W."/>
            <person name="Butchko R.A.E."/>
            <person name="Chapman S."/>
            <person name="Coulson R."/>
            <person name="Coutinho P.M."/>
            <person name="Danchin E.G.J."/>
            <person name="Diener A."/>
            <person name="Gale L.R."/>
            <person name="Gardiner D.M."/>
            <person name="Goff S."/>
            <person name="Hammond-Kosack K.E."/>
            <person name="Hilburn K."/>
            <person name="Hua-Van A."/>
            <person name="Jonkers W."/>
            <person name="Kazan K."/>
            <person name="Kodira C.D."/>
            <person name="Koehrsen M."/>
            <person name="Kumar L."/>
            <person name="Lee Y.-H."/>
            <person name="Li L."/>
            <person name="Manners J.M."/>
            <person name="Miranda-Saavedra D."/>
            <person name="Mukherjee M."/>
            <person name="Park G."/>
            <person name="Park J."/>
            <person name="Park S.-Y."/>
            <person name="Proctor R.H."/>
            <person name="Regev A."/>
            <person name="Ruiz-Roldan M.C."/>
            <person name="Sain D."/>
            <person name="Sakthikumar S."/>
            <person name="Sykes S."/>
            <person name="Schwartz D.C."/>
            <person name="Turgeon B.G."/>
            <person name="Wapinski I."/>
            <person name="Yoder O."/>
            <person name="Young S."/>
            <person name="Zeng Q."/>
            <person name="Zhou S."/>
            <person name="Galagan J."/>
            <person name="Cuomo C.A."/>
            <person name="Kistler H.C."/>
            <person name="Rep M."/>
        </authorList>
    </citation>
    <scope>NUCLEOTIDE SEQUENCE [LARGE SCALE GENOMIC DNA]</scope>
    <source>
        <strain>4287 / CBS 123668 / FGSC 9935 / NRRL 34936</strain>
    </source>
</reference>
<name>CHS1_FUSO4</name>
<accession>A0A0J9UR41</accession>
<accession>A0A0J9USU6</accession>
<accession>Q5YCX1</accession>
<comment type="function">
    <text evidence="4 7">Polymerizes chitin, a structural polymer of the cell wall and septum, by transferring the sugar moiety of UDP-GlcNAc to the non-reducing end of the growing chitin polymer (Probable). Plays an important role in nuclear sorting or distribution (PubMed:15470098).</text>
</comment>
<comment type="catalytic activity">
    <reaction evidence="7">
        <text>[(1-&gt;4)-N-acetyl-beta-D-glucosaminyl](n) + UDP-N-acetyl-alpha-D-glucosamine = [(1-&gt;4)-N-acetyl-beta-D-glucosaminyl](n+1) + UDP + H(+)</text>
        <dbReference type="Rhea" id="RHEA:16637"/>
        <dbReference type="Rhea" id="RHEA-COMP:9593"/>
        <dbReference type="Rhea" id="RHEA-COMP:9595"/>
        <dbReference type="ChEBI" id="CHEBI:15378"/>
        <dbReference type="ChEBI" id="CHEBI:17029"/>
        <dbReference type="ChEBI" id="CHEBI:57705"/>
        <dbReference type="ChEBI" id="CHEBI:58223"/>
        <dbReference type="EC" id="2.4.1.16"/>
    </reaction>
    <physiologicalReaction direction="left-to-right" evidence="7">
        <dbReference type="Rhea" id="RHEA:16638"/>
    </physiologicalReaction>
</comment>
<comment type="subcellular location">
    <subcellularLocation>
        <location evidence="6">Cell membrane</location>
        <topology evidence="1">Multi-pass membrane protein</topology>
    </subcellularLocation>
</comment>
<comment type="disruption phenotype">
    <text evidence="4">Reduces the chitin content by about 10% (PubMed:15470098). Leads to increased hyphal hydrophobicity and compartments containing up to four nuclei (PubMed:15470098).</text>
</comment>
<comment type="similarity">
    <text evidence="6">Belongs to the chitin synthase family. Class I subfamily.</text>
</comment>
<comment type="sequence caution" evidence="6">
    <conflict type="erroneous initiation">
        <sequence resource="EMBL-CDS" id="KNB02018"/>
    </conflict>
    <text>Extended N-terminus.</text>
</comment>
<keyword id="KW-1003">Cell membrane</keyword>
<keyword id="KW-0961">Cell wall biogenesis/degradation</keyword>
<keyword id="KW-0325">Glycoprotein</keyword>
<keyword id="KW-0328">Glycosyltransferase</keyword>
<keyword id="KW-0472">Membrane</keyword>
<keyword id="KW-1185">Reference proteome</keyword>
<keyword id="KW-0808">Transferase</keyword>
<keyword id="KW-0812">Transmembrane</keyword>
<keyword id="KW-1133">Transmembrane helix</keyword>